<keyword id="KW-0007">Acetylation</keyword>
<keyword id="KW-0238">DNA-binding</keyword>
<keyword id="KW-0509">mRNA transport</keyword>
<keyword id="KW-0539">Nucleus</keyword>
<keyword id="KW-1185">Reference proteome</keyword>
<keyword id="KW-0694">RNA-binding</keyword>
<keyword id="KW-0813">Transport</keyword>
<comment type="function">
    <text evidence="3 5">Involved in export of poly(A) mRNAs from the nucleus. Recruited to the coding sequences as well as poly-A sites of active genes.</text>
</comment>
<comment type="subunit">
    <text evidence="5">Associates with mRNPs. Interacts with YRA1.</text>
</comment>
<comment type="subcellular location">
    <subcellularLocation>
        <location evidence="3">Nucleus</location>
    </subcellularLocation>
</comment>
<comment type="miscellaneous">
    <text evidence="4">Present with 1310 molecules/cell in log phase SD medium.</text>
</comment>
<comment type="similarity">
    <text evidence="6">Belongs to the YRA1 family.</text>
</comment>
<sequence length="203" mass="23778">MDKAFDEIIGNSHTDSSSNHKVTRYRRRDLRNELGPRLGFAPSDAASRSKDRLYREREEPPLPKRIRISKIPLDVSDYTLDDMIKEFGSPIFSKIFDNKEDRTCIYEFEDPEVLEKIVERYNGHELHNAKIEVEIYQPQRKHSRMNAHNRRKQTAQEHGRGRPGSHYRQKPNRVSKKNKGREKNNTPTSVEALDAELDAYMKG</sequence>
<dbReference type="EMBL" id="X75951">
    <property type="protein sequence ID" value="CAA53559.1"/>
    <property type="molecule type" value="Genomic_DNA"/>
</dbReference>
<dbReference type="EMBL" id="Z28214">
    <property type="protein sequence ID" value="CAA82059.1"/>
    <property type="molecule type" value="Genomic_DNA"/>
</dbReference>
<dbReference type="EMBL" id="BK006944">
    <property type="protein sequence ID" value="DAA08955.1"/>
    <property type="molecule type" value="Genomic_DNA"/>
</dbReference>
<dbReference type="PIR" id="S38052">
    <property type="entry name" value="S38052"/>
</dbReference>
<dbReference type="RefSeq" id="NP_012708.1">
    <property type="nucleotide sequence ID" value="NM_001179779.1"/>
</dbReference>
<dbReference type="SMR" id="P36036"/>
<dbReference type="BioGRID" id="33951">
    <property type="interactions" value="305"/>
</dbReference>
<dbReference type="DIP" id="DIP-6538N"/>
<dbReference type="FunCoup" id="P36036">
    <property type="interactions" value="246"/>
</dbReference>
<dbReference type="IntAct" id="P36036">
    <property type="interactions" value="10"/>
</dbReference>
<dbReference type="MINT" id="P36036"/>
<dbReference type="STRING" id="4932.YKL214C"/>
<dbReference type="TCDB" id="3.A.22.1.1">
    <property type="family name" value="the transcription-coupled trex/tap nuclear mrna export complex (trex) family"/>
</dbReference>
<dbReference type="iPTMnet" id="P36036"/>
<dbReference type="PaxDb" id="4932-YKL214C"/>
<dbReference type="PeptideAtlas" id="P36036"/>
<dbReference type="EnsemblFungi" id="YKL214C_mRNA">
    <property type="protein sequence ID" value="YKL214C"/>
    <property type="gene ID" value="YKL214C"/>
</dbReference>
<dbReference type="GeneID" id="853666"/>
<dbReference type="KEGG" id="sce:YKL214C"/>
<dbReference type="AGR" id="SGD:S000001697"/>
<dbReference type="SGD" id="S000001697">
    <property type="gene designation" value="YRA2"/>
</dbReference>
<dbReference type="VEuPathDB" id="FungiDB:YKL214C"/>
<dbReference type="eggNOG" id="ENOG502S444">
    <property type="taxonomic scope" value="Eukaryota"/>
</dbReference>
<dbReference type="HOGENOM" id="CLU_111217_0_0_1"/>
<dbReference type="InParanoid" id="P36036"/>
<dbReference type="OMA" id="KQTAQEH"/>
<dbReference type="OrthoDB" id="1099063at2759"/>
<dbReference type="BioCyc" id="YEAST:G3O-31972-MONOMER"/>
<dbReference type="BioGRID-ORCS" id="853666">
    <property type="hits" value="1 hit in 10 CRISPR screens"/>
</dbReference>
<dbReference type="PRO" id="PR:P36036"/>
<dbReference type="Proteomes" id="UP000002311">
    <property type="component" value="Chromosome XI"/>
</dbReference>
<dbReference type="RNAct" id="P36036">
    <property type="molecule type" value="protein"/>
</dbReference>
<dbReference type="GO" id="GO:0005634">
    <property type="term" value="C:nucleus"/>
    <property type="evidence" value="ECO:0000314"/>
    <property type="project" value="SGD"/>
</dbReference>
<dbReference type="GO" id="GO:0003677">
    <property type="term" value="F:DNA binding"/>
    <property type="evidence" value="ECO:0007669"/>
    <property type="project" value="UniProtKB-KW"/>
</dbReference>
<dbReference type="GO" id="GO:0003723">
    <property type="term" value="F:RNA binding"/>
    <property type="evidence" value="ECO:0000314"/>
    <property type="project" value="SGD"/>
</dbReference>
<dbReference type="GO" id="GO:0016973">
    <property type="term" value="P:poly(A)+ mRNA export from nucleus"/>
    <property type="evidence" value="ECO:0000315"/>
    <property type="project" value="SGD"/>
</dbReference>
<dbReference type="CDD" id="cd12295">
    <property type="entry name" value="RRM_YRA2"/>
    <property type="match status" value="1"/>
</dbReference>
<dbReference type="FunFam" id="3.30.70.330:FF:000793">
    <property type="entry name" value="RNA annealing protein YRA2"/>
    <property type="match status" value="1"/>
</dbReference>
<dbReference type="Gene3D" id="3.30.70.330">
    <property type="match status" value="1"/>
</dbReference>
<dbReference type="InterPro" id="IPR025715">
    <property type="entry name" value="FoP_C"/>
</dbReference>
<dbReference type="InterPro" id="IPR012677">
    <property type="entry name" value="Nucleotide-bd_a/b_plait_sf"/>
</dbReference>
<dbReference type="InterPro" id="IPR035979">
    <property type="entry name" value="RBD_domain_sf"/>
</dbReference>
<dbReference type="InterPro" id="IPR000504">
    <property type="entry name" value="RRM_dom"/>
</dbReference>
<dbReference type="InterPro" id="IPR034396">
    <property type="entry name" value="Yra2_RRM"/>
</dbReference>
<dbReference type="Pfam" id="PF13865">
    <property type="entry name" value="FoP_duplication"/>
    <property type="match status" value="1"/>
</dbReference>
<dbReference type="Pfam" id="PF00076">
    <property type="entry name" value="RRM_1"/>
    <property type="match status" value="1"/>
</dbReference>
<dbReference type="SMART" id="SM00360">
    <property type="entry name" value="RRM"/>
    <property type="match status" value="1"/>
</dbReference>
<dbReference type="SUPFAM" id="SSF54928">
    <property type="entry name" value="RNA-binding domain, RBD"/>
    <property type="match status" value="1"/>
</dbReference>
<dbReference type="PROSITE" id="PS50102">
    <property type="entry name" value="RRM"/>
    <property type="match status" value="1"/>
</dbReference>
<gene>
    <name type="primary">YRA2</name>
    <name type="ordered locus">YKL214C</name>
</gene>
<protein>
    <recommendedName>
        <fullName>RNA annealing protein YRA2</fullName>
    </recommendedName>
</protein>
<proteinExistence type="evidence at protein level"/>
<evidence type="ECO:0000255" key="1">
    <source>
        <dbReference type="PROSITE-ProRule" id="PRU00176"/>
    </source>
</evidence>
<evidence type="ECO:0000256" key="2">
    <source>
        <dbReference type="SAM" id="MobiDB-lite"/>
    </source>
</evidence>
<evidence type="ECO:0000269" key="3">
    <source>
    </source>
</evidence>
<evidence type="ECO:0000269" key="4">
    <source>
    </source>
</evidence>
<evidence type="ECO:0000269" key="5">
    <source>
    </source>
</evidence>
<evidence type="ECO:0000305" key="6"/>
<evidence type="ECO:0007744" key="7">
    <source>
    </source>
</evidence>
<organism>
    <name type="scientific">Saccharomyces cerevisiae (strain ATCC 204508 / S288c)</name>
    <name type="common">Baker's yeast</name>
    <dbReference type="NCBI Taxonomy" id="559292"/>
    <lineage>
        <taxon>Eukaryota</taxon>
        <taxon>Fungi</taxon>
        <taxon>Dikarya</taxon>
        <taxon>Ascomycota</taxon>
        <taxon>Saccharomycotina</taxon>
        <taxon>Saccharomycetes</taxon>
        <taxon>Saccharomycetales</taxon>
        <taxon>Saccharomycetaceae</taxon>
        <taxon>Saccharomyces</taxon>
    </lineage>
</organism>
<accession>P36036</accession>
<accession>D6VWY9</accession>
<feature type="chain" id="PRO_0000082033" description="RNA annealing protein YRA2">
    <location>
        <begin position="1"/>
        <end position="203"/>
    </location>
</feature>
<feature type="domain" description="RRM" evidence="1">
    <location>
        <begin position="64"/>
        <end position="138"/>
    </location>
</feature>
<feature type="region of interest" description="Disordered" evidence="2">
    <location>
        <begin position="1"/>
        <end position="60"/>
    </location>
</feature>
<feature type="region of interest" description="Disordered" evidence="2">
    <location>
        <begin position="137"/>
        <end position="203"/>
    </location>
</feature>
<feature type="compositionally biased region" description="Polar residues" evidence="2">
    <location>
        <begin position="11"/>
        <end position="20"/>
    </location>
</feature>
<feature type="compositionally biased region" description="Basic and acidic residues" evidence="2">
    <location>
        <begin position="47"/>
        <end position="60"/>
    </location>
</feature>
<feature type="compositionally biased region" description="Basic residues" evidence="2">
    <location>
        <begin position="139"/>
        <end position="153"/>
    </location>
</feature>
<feature type="compositionally biased region" description="Basic residues" evidence="2">
    <location>
        <begin position="161"/>
        <end position="180"/>
    </location>
</feature>
<feature type="modified residue" description="N-acetylmethionine" evidence="7">
    <location>
        <position position="1"/>
    </location>
</feature>
<reference key="1">
    <citation type="journal article" date="1994" name="Yeast">
        <title>The complete sequencing of a 24.6 kb segment of yeast chromosome XI identified the known loci URA1, SAC1 and TRP3, and revealed 6 new open reading frames including homologues to the threonine dehydratases, membrane transporters, hydantoinases and the phospholipase A2-activating protein.</title>
        <authorList>
            <person name="Tzermia M."/>
            <person name="Horaitis O."/>
            <person name="Alexandraki D."/>
        </authorList>
    </citation>
    <scope>NUCLEOTIDE SEQUENCE [GENOMIC DNA]</scope>
    <source>
        <strain>ATCC 204508 / S288c</strain>
    </source>
</reference>
<reference key="2">
    <citation type="journal article" date="1994" name="Nature">
        <title>Complete DNA sequence of yeast chromosome XI.</title>
        <authorList>
            <person name="Dujon B."/>
            <person name="Alexandraki D."/>
            <person name="Andre B."/>
            <person name="Ansorge W."/>
            <person name="Baladron V."/>
            <person name="Ballesta J.P.G."/>
            <person name="Banrevi A."/>
            <person name="Bolle P.-A."/>
            <person name="Bolotin-Fukuhara M."/>
            <person name="Bossier P."/>
            <person name="Bou G."/>
            <person name="Boyer J."/>
            <person name="Buitrago M.J."/>
            <person name="Cheret G."/>
            <person name="Colleaux L."/>
            <person name="Daignan-Fornier B."/>
            <person name="del Rey F."/>
            <person name="Dion C."/>
            <person name="Domdey H."/>
            <person name="Duesterhoeft A."/>
            <person name="Duesterhus S."/>
            <person name="Entian K.-D."/>
            <person name="Erfle H."/>
            <person name="Esteban P.F."/>
            <person name="Feldmann H."/>
            <person name="Fernandes L."/>
            <person name="Fobo G.M."/>
            <person name="Fritz C."/>
            <person name="Fukuhara H."/>
            <person name="Gabel C."/>
            <person name="Gaillon L."/>
            <person name="Garcia-Cantalejo J.M."/>
            <person name="Garcia-Ramirez J.J."/>
            <person name="Gent M.E."/>
            <person name="Ghazvini M."/>
            <person name="Goffeau A."/>
            <person name="Gonzalez A."/>
            <person name="Grothues D."/>
            <person name="Guerreiro P."/>
            <person name="Hegemann J.H."/>
            <person name="Hewitt N."/>
            <person name="Hilger F."/>
            <person name="Hollenberg C.P."/>
            <person name="Horaitis O."/>
            <person name="Indge K.J."/>
            <person name="Jacquier A."/>
            <person name="James C.M."/>
            <person name="Jauniaux J.-C."/>
            <person name="Jimenez A."/>
            <person name="Keuchel H."/>
            <person name="Kirchrath L."/>
            <person name="Kleine K."/>
            <person name="Koetter P."/>
            <person name="Legrain P."/>
            <person name="Liebl S."/>
            <person name="Louis E.J."/>
            <person name="Maia e Silva A."/>
            <person name="Marck C."/>
            <person name="Monnier A.-L."/>
            <person name="Moestl D."/>
            <person name="Mueller S."/>
            <person name="Obermaier B."/>
            <person name="Oliver S.G."/>
            <person name="Pallier C."/>
            <person name="Pascolo S."/>
            <person name="Pfeiffer F."/>
            <person name="Philippsen P."/>
            <person name="Planta R.J."/>
            <person name="Pohl F.M."/>
            <person name="Pohl T.M."/>
            <person name="Poehlmann R."/>
            <person name="Portetelle D."/>
            <person name="Purnelle B."/>
            <person name="Puzos V."/>
            <person name="Ramezani Rad M."/>
            <person name="Rasmussen S.W."/>
            <person name="Remacha M.A."/>
            <person name="Revuelta J.L."/>
            <person name="Richard G.-F."/>
            <person name="Rieger M."/>
            <person name="Rodrigues-Pousada C."/>
            <person name="Rose M."/>
            <person name="Rupp T."/>
            <person name="Santos M.A."/>
            <person name="Schwager C."/>
            <person name="Sensen C."/>
            <person name="Skala J."/>
            <person name="Soares H."/>
            <person name="Sor F."/>
            <person name="Stegemann J."/>
            <person name="Tettelin H."/>
            <person name="Thierry A."/>
            <person name="Tzermia M."/>
            <person name="Urrestarazu L.A."/>
            <person name="van Dyck L."/>
            <person name="van Vliet-Reedijk J.C."/>
            <person name="Valens M."/>
            <person name="Vandenbol M."/>
            <person name="Vilela C."/>
            <person name="Vissers S."/>
            <person name="von Wettstein D."/>
            <person name="Voss H."/>
            <person name="Wiemann S."/>
            <person name="Xu G."/>
            <person name="Zimmermann J."/>
            <person name="Haasemann M."/>
            <person name="Becker I."/>
            <person name="Mewes H.-W."/>
        </authorList>
    </citation>
    <scope>NUCLEOTIDE SEQUENCE [LARGE SCALE GENOMIC DNA]</scope>
    <source>
        <strain>ATCC 204508 / S288c</strain>
    </source>
</reference>
<reference key="3">
    <citation type="journal article" date="2014" name="G3 (Bethesda)">
        <title>The reference genome sequence of Saccharomyces cerevisiae: Then and now.</title>
        <authorList>
            <person name="Engel S.R."/>
            <person name="Dietrich F.S."/>
            <person name="Fisk D.G."/>
            <person name="Binkley G."/>
            <person name="Balakrishnan R."/>
            <person name="Costanzo M.C."/>
            <person name="Dwight S.S."/>
            <person name="Hitz B.C."/>
            <person name="Karra K."/>
            <person name="Nash R.S."/>
            <person name="Weng S."/>
            <person name="Wong E.D."/>
            <person name="Lloyd P."/>
            <person name="Skrzypek M.S."/>
            <person name="Miyasato S.R."/>
            <person name="Simison M."/>
            <person name="Cherry J.M."/>
        </authorList>
    </citation>
    <scope>GENOME REANNOTATION</scope>
    <source>
        <strain>ATCC 204508 / S288c</strain>
    </source>
</reference>
<reference key="4">
    <citation type="journal article" date="2001" name="Mol. Cell. Biol.">
        <title>The yeast hnRNP-Like proteins Yra1p and Yra2p participate in mRNA export through interaction with Mex67p.</title>
        <authorList>
            <person name="Zenklusen D."/>
            <person name="Vinciguerra P."/>
            <person name="Strahm Y."/>
            <person name="Stutz F."/>
        </authorList>
    </citation>
    <scope>FUNCTION</scope>
    <scope>ASSOCIATION WITH MRNPS</scope>
    <scope>SUBCELLULAR LOCATION</scope>
</reference>
<reference key="5">
    <citation type="journal article" date="2003" name="Nature">
        <title>Global analysis of protein expression in yeast.</title>
        <authorList>
            <person name="Ghaemmaghami S."/>
            <person name="Huh W.-K."/>
            <person name="Bower K."/>
            <person name="Howson R.W."/>
            <person name="Belle A."/>
            <person name="Dephoure N."/>
            <person name="O'Shea E.K."/>
            <person name="Weissman J.S."/>
        </authorList>
    </citation>
    <scope>LEVEL OF PROTEIN EXPRESSION [LARGE SCALE ANALYSIS]</scope>
</reference>
<reference key="6">
    <citation type="journal article" date="2005" name="Yeast">
        <title>Biochemical and genetic characterization of Yra1p in budding yeast.</title>
        <authorList>
            <person name="Kashyap A.K."/>
            <person name="Schieltz D."/>
            <person name="Yates J. III"/>
            <person name="Kellogg D.R."/>
        </authorList>
    </citation>
    <scope>FUNCTION</scope>
    <scope>INTERACTION WITH YRA1</scope>
</reference>
<reference key="7">
    <citation type="journal article" date="2007" name="Nat. Methods">
        <title>Comprehensive analysis of diverse ribonucleoprotein complexes.</title>
        <authorList>
            <person name="Oeffinger M."/>
            <person name="Wei K.E."/>
            <person name="Rogers R."/>
            <person name="DeGrasse J.A."/>
            <person name="Chait B.T."/>
            <person name="Aitchison J.D."/>
            <person name="Rout M.P."/>
        </authorList>
    </citation>
    <scope>IDENTIFICATION BY MASS SPECTROMETRY</scope>
    <scope>ASSOCIATION WITH MRNPS</scope>
</reference>
<reference key="8">
    <citation type="journal article" date="2009" name="J. Mol. Biol.">
        <title>Stimulation of mRNA export by an F-box protein, Mdm30p, in vivo.</title>
        <authorList>
            <person name="Shukla A."/>
            <person name="Durairaj G."/>
            <person name="Schneider J."/>
            <person name="Duan Z."/>
            <person name="Shadle T."/>
            <person name="Bhaumik S.R."/>
        </authorList>
    </citation>
    <scope>DNA-BINDING</scope>
</reference>
<reference key="9">
    <citation type="journal article" date="2012" name="Proc. Natl. Acad. Sci. U.S.A.">
        <title>N-terminal acetylome analyses and functional insights of the N-terminal acetyltransferase NatB.</title>
        <authorList>
            <person name="Van Damme P."/>
            <person name="Lasa M."/>
            <person name="Polevoda B."/>
            <person name="Gazquez C."/>
            <person name="Elosegui-Artola A."/>
            <person name="Kim D.S."/>
            <person name="De Juan-Pardo E."/>
            <person name="Demeyer K."/>
            <person name="Hole K."/>
            <person name="Larrea E."/>
            <person name="Timmerman E."/>
            <person name="Prieto J."/>
            <person name="Arnesen T."/>
            <person name="Sherman F."/>
            <person name="Gevaert K."/>
            <person name="Aldabe R."/>
        </authorList>
    </citation>
    <scope>ACETYLATION [LARGE SCALE ANALYSIS] AT MET-1</scope>
    <scope>IDENTIFICATION BY MASS SPECTROMETRY [LARGE SCALE ANALYSIS]</scope>
</reference>
<name>YRA2_YEAST</name>